<feature type="chain" id="PRO_0000358848" description="Transcription factor MEE8">
    <location>
        <begin position="1"/>
        <end position="145"/>
    </location>
</feature>
<feature type="domain" description="bHLH" evidence="1">
    <location>
        <begin position="66"/>
        <end position="115"/>
    </location>
</feature>
<feature type="region of interest" description="Disordered" evidence="2">
    <location>
        <begin position="33"/>
        <end position="61"/>
    </location>
</feature>
<feature type="compositionally biased region" description="Basic and acidic residues" evidence="2">
    <location>
        <begin position="33"/>
        <end position="49"/>
    </location>
</feature>
<organism>
    <name type="scientific">Arabidopsis thaliana</name>
    <name type="common">Mouse-ear cress</name>
    <dbReference type="NCBI Taxonomy" id="3702"/>
    <lineage>
        <taxon>Eukaryota</taxon>
        <taxon>Viridiplantae</taxon>
        <taxon>Streptophyta</taxon>
        <taxon>Embryophyta</taxon>
        <taxon>Tracheophyta</taxon>
        <taxon>Spermatophyta</taxon>
        <taxon>Magnoliopsida</taxon>
        <taxon>eudicotyledons</taxon>
        <taxon>Gunneridae</taxon>
        <taxon>Pentapetalae</taxon>
        <taxon>rosids</taxon>
        <taxon>malvids</taxon>
        <taxon>Brassicales</taxon>
        <taxon>Brassicaceae</taxon>
        <taxon>Camelineae</taxon>
        <taxon>Arabidopsis</taxon>
    </lineage>
</organism>
<reference key="1">
    <citation type="journal article" date="2000" name="Nature">
        <title>Sequence and analysis of chromosome 1 of the plant Arabidopsis thaliana.</title>
        <authorList>
            <person name="Theologis A."/>
            <person name="Ecker J.R."/>
            <person name="Palm C.J."/>
            <person name="Federspiel N.A."/>
            <person name="Kaul S."/>
            <person name="White O."/>
            <person name="Alonso J."/>
            <person name="Altafi H."/>
            <person name="Araujo R."/>
            <person name="Bowman C.L."/>
            <person name="Brooks S.Y."/>
            <person name="Buehler E."/>
            <person name="Chan A."/>
            <person name="Chao Q."/>
            <person name="Chen H."/>
            <person name="Cheuk R.F."/>
            <person name="Chin C.W."/>
            <person name="Chung M.K."/>
            <person name="Conn L."/>
            <person name="Conway A.B."/>
            <person name="Conway A.R."/>
            <person name="Creasy T.H."/>
            <person name="Dewar K."/>
            <person name="Dunn P."/>
            <person name="Etgu P."/>
            <person name="Feldblyum T.V."/>
            <person name="Feng J.-D."/>
            <person name="Fong B."/>
            <person name="Fujii C.Y."/>
            <person name="Gill J.E."/>
            <person name="Goldsmith A.D."/>
            <person name="Haas B."/>
            <person name="Hansen N.F."/>
            <person name="Hughes B."/>
            <person name="Huizar L."/>
            <person name="Hunter J.L."/>
            <person name="Jenkins J."/>
            <person name="Johnson-Hopson C."/>
            <person name="Khan S."/>
            <person name="Khaykin E."/>
            <person name="Kim C.J."/>
            <person name="Koo H.L."/>
            <person name="Kremenetskaia I."/>
            <person name="Kurtz D.B."/>
            <person name="Kwan A."/>
            <person name="Lam B."/>
            <person name="Langin-Hooper S."/>
            <person name="Lee A."/>
            <person name="Lee J.M."/>
            <person name="Lenz C.A."/>
            <person name="Li J.H."/>
            <person name="Li Y.-P."/>
            <person name="Lin X."/>
            <person name="Liu S.X."/>
            <person name="Liu Z.A."/>
            <person name="Luros J.S."/>
            <person name="Maiti R."/>
            <person name="Marziali A."/>
            <person name="Militscher J."/>
            <person name="Miranda M."/>
            <person name="Nguyen M."/>
            <person name="Nierman W.C."/>
            <person name="Osborne B.I."/>
            <person name="Pai G."/>
            <person name="Peterson J."/>
            <person name="Pham P.K."/>
            <person name="Rizzo M."/>
            <person name="Rooney T."/>
            <person name="Rowley D."/>
            <person name="Sakano H."/>
            <person name="Salzberg S.L."/>
            <person name="Schwartz J.R."/>
            <person name="Shinn P."/>
            <person name="Southwick A.M."/>
            <person name="Sun H."/>
            <person name="Tallon L.J."/>
            <person name="Tambunga G."/>
            <person name="Toriumi M.J."/>
            <person name="Town C.D."/>
            <person name="Utterback T."/>
            <person name="Van Aken S."/>
            <person name="Vaysberg M."/>
            <person name="Vysotskaia V.S."/>
            <person name="Walker M."/>
            <person name="Wu D."/>
            <person name="Yu G."/>
            <person name="Fraser C.M."/>
            <person name="Venter J.C."/>
            <person name="Davis R.W."/>
        </authorList>
    </citation>
    <scope>NUCLEOTIDE SEQUENCE [LARGE SCALE GENOMIC DNA]</scope>
    <source>
        <strain>cv. Columbia</strain>
    </source>
</reference>
<reference key="2">
    <citation type="journal article" date="2017" name="Plant J.">
        <title>Araport11: a complete reannotation of the Arabidopsis thaliana reference genome.</title>
        <authorList>
            <person name="Cheng C.Y."/>
            <person name="Krishnakumar V."/>
            <person name="Chan A.P."/>
            <person name="Thibaud-Nissen F."/>
            <person name="Schobel S."/>
            <person name="Town C.D."/>
        </authorList>
    </citation>
    <scope>GENOME REANNOTATION</scope>
    <source>
        <strain>cv. Columbia</strain>
    </source>
</reference>
<reference key="3">
    <citation type="journal article" date="2003" name="Mol. Biol. Evol.">
        <title>The basic helix-loop-helix transcription factor family in plants: a genome-wide study of protein structure and functional diversity.</title>
        <authorList>
            <person name="Heim M.A."/>
            <person name="Jakoby M."/>
            <person name="Werber M."/>
            <person name="Martin C."/>
            <person name="Weisshaar B."/>
            <person name="Bailey P.C."/>
        </authorList>
    </citation>
    <scope>GENE FAMILY</scope>
    <scope>NOMENCLATURE</scope>
</reference>
<reference key="4">
    <citation type="journal article" date="2003" name="Plant Cell">
        <title>The Arabidopsis basic/helix-loop-helix transcription factor family.</title>
        <authorList>
            <person name="Toledo-Ortiz G."/>
            <person name="Huq E."/>
            <person name="Quail P.H."/>
        </authorList>
    </citation>
    <scope>GENE FAMILY</scope>
</reference>
<reference key="5">
    <citation type="journal article" date="2003" name="Plant Cell">
        <title>Update on the basic helix-loop-helix transcription factor gene family in Arabidopsis thaliana.</title>
        <authorList>
            <person name="Bailey P.C."/>
            <person name="Martin C."/>
            <person name="Toledo-Ortiz G."/>
            <person name="Quail P.H."/>
            <person name="Huq E."/>
            <person name="Heim M.A."/>
            <person name="Jakoby M."/>
            <person name="Werber M."/>
            <person name="Weisshaar B."/>
        </authorList>
    </citation>
    <scope>GENE FAMILY</scope>
    <scope>NOMENCLATURE</scope>
</reference>
<reference key="6">
    <citation type="journal article" date="2005" name="Development">
        <title>Genetic and molecular identification of genes required for female gametophyte development and function in Arabidopsis.</title>
        <authorList>
            <person name="Pagnussat G.C."/>
            <person name="Yu H.-J."/>
            <person name="Ngo Q.A."/>
            <person name="Rajani S."/>
            <person name="Mayalagu S."/>
            <person name="Johnson C.S."/>
            <person name="Capron A."/>
            <person name="Xie L.-F."/>
            <person name="Ye D."/>
            <person name="Sundaresan V."/>
        </authorList>
    </citation>
    <scope>FUNCTION</scope>
</reference>
<accession>Q9FRI0</accession>
<proteinExistence type="inferred from homology"/>
<name>MEE8_ARATH</name>
<keyword id="KW-0217">Developmental protein</keyword>
<keyword id="KW-0238">DNA-binding</keyword>
<keyword id="KW-0539">Nucleus</keyword>
<keyword id="KW-1185">Reference proteome</keyword>
<keyword id="KW-0804">Transcription</keyword>
<keyword id="KW-0805">Transcription regulation</keyword>
<gene>
    <name type="primary">MEE8</name>
    <name type="synonym">BHLH108</name>
    <name type="synonym">EN132</name>
    <name type="ordered locus">At1g25310</name>
    <name type="ORF">F4F7.30</name>
</gene>
<protein>
    <recommendedName>
        <fullName>Transcription factor MEE8</fullName>
    </recommendedName>
    <alternativeName>
        <fullName>Basic helix-loop-helix protein 108</fullName>
        <shortName>AtbHLH108</shortName>
        <shortName>bHLH 108</shortName>
    </alternativeName>
    <alternativeName>
        <fullName>Protein MATERNAL EFFECT EMBRYO ARREST 8</fullName>
    </alternativeName>
    <alternativeName>
        <fullName>Transcription factor EN 132</fullName>
    </alternativeName>
    <alternativeName>
        <fullName>bHLH transcription factor bHLH108</fullName>
    </alternativeName>
</protein>
<dbReference type="EMBL" id="AC079374">
    <property type="protein sequence ID" value="AAG40092.1"/>
    <property type="molecule type" value="Genomic_DNA"/>
</dbReference>
<dbReference type="EMBL" id="CP002684">
    <property type="protein sequence ID" value="AEE30605.1"/>
    <property type="molecule type" value="Genomic_DNA"/>
</dbReference>
<dbReference type="RefSeq" id="NP_173902.1">
    <property type="nucleotide sequence ID" value="NM_102341.1"/>
</dbReference>
<dbReference type="SMR" id="Q9FRI0"/>
<dbReference type="BioGRID" id="24352">
    <property type="interactions" value="7"/>
</dbReference>
<dbReference type="IntAct" id="Q9FRI0">
    <property type="interactions" value="6"/>
</dbReference>
<dbReference type="STRING" id="3702.Q9FRI0"/>
<dbReference type="PaxDb" id="3702-AT1G25310.1"/>
<dbReference type="EnsemblPlants" id="AT1G25310.1">
    <property type="protein sequence ID" value="AT1G25310.1"/>
    <property type="gene ID" value="AT1G25310"/>
</dbReference>
<dbReference type="GeneID" id="839115"/>
<dbReference type="Gramene" id="AT1G25310.1">
    <property type="protein sequence ID" value="AT1G25310.1"/>
    <property type="gene ID" value="AT1G25310"/>
</dbReference>
<dbReference type="KEGG" id="ath:AT1G25310"/>
<dbReference type="Araport" id="AT1G25310"/>
<dbReference type="TAIR" id="AT1G25310">
    <property type="gene designation" value="MEE8"/>
</dbReference>
<dbReference type="HOGENOM" id="CLU_1789495_0_0_1"/>
<dbReference type="InParanoid" id="Q9FRI0"/>
<dbReference type="OMA" id="QLWSEIM"/>
<dbReference type="PRO" id="PR:Q9FRI0"/>
<dbReference type="Proteomes" id="UP000006548">
    <property type="component" value="Chromosome 1"/>
</dbReference>
<dbReference type="ExpressionAtlas" id="Q9FRI0">
    <property type="expression patterns" value="baseline and differential"/>
</dbReference>
<dbReference type="GO" id="GO:0005634">
    <property type="term" value="C:nucleus"/>
    <property type="evidence" value="ECO:0000314"/>
    <property type="project" value="TAIR"/>
</dbReference>
<dbReference type="GO" id="GO:0003677">
    <property type="term" value="F:DNA binding"/>
    <property type="evidence" value="ECO:0007669"/>
    <property type="project" value="UniProtKB-KW"/>
</dbReference>
<dbReference type="GO" id="GO:0003700">
    <property type="term" value="F:DNA-binding transcription factor activity"/>
    <property type="evidence" value="ECO:0000250"/>
    <property type="project" value="TAIR"/>
</dbReference>
<dbReference type="GO" id="GO:0046983">
    <property type="term" value="F:protein dimerization activity"/>
    <property type="evidence" value="ECO:0007669"/>
    <property type="project" value="InterPro"/>
</dbReference>
<dbReference type="GO" id="GO:0009793">
    <property type="term" value="P:embryo development ending in seed dormancy"/>
    <property type="evidence" value="ECO:0000315"/>
    <property type="project" value="TAIR"/>
</dbReference>
<dbReference type="Gene3D" id="4.10.280.10">
    <property type="entry name" value="Helix-loop-helix DNA-binding domain"/>
    <property type="match status" value="1"/>
</dbReference>
<dbReference type="InterPro" id="IPR011598">
    <property type="entry name" value="bHLH_dom"/>
</dbReference>
<dbReference type="InterPro" id="IPR036638">
    <property type="entry name" value="HLH_DNA-bd_sf"/>
</dbReference>
<dbReference type="SUPFAM" id="SSF47459">
    <property type="entry name" value="HLH, helix-loop-helix DNA-binding domain"/>
    <property type="match status" value="1"/>
</dbReference>
<dbReference type="PROSITE" id="PS50888">
    <property type="entry name" value="BHLH"/>
    <property type="match status" value="1"/>
</dbReference>
<evidence type="ECO:0000255" key="1">
    <source>
        <dbReference type="PROSITE-ProRule" id="PRU00981"/>
    </source>
</evidence>
<evidence type="ECO:0000256" key="2">
    <source>
        <dbReference type="SAM" id="MobiDB-lite"/>
    </source>
</evidence>
<evidence type="ECO:0000269" key="3">
    <source>
    </source>
</evidence>
<evidence type="ECO:0000305" key="4"/>
<sequence length="145" mass="17020">MNKDEVFLRQWFEILYSLTNPEANSDLRRINNEKGVEKVGQKRSAESRREGKKKRVKTQCVIKSSDKSDHDTLLKKKRRERIRRQLETLKEITPNCPQSDINAILDCVIEYTNNLRLAHYKGSQGICDDWRLFTEAGAVLYYIDT</sequence>
<comment type="function">
    <text evidence="3">Required during early embryo development, for the endosperm formation.</text>
</comment>
<comment type="subunit">
    <text evidence="4">Homodimer.</text>
</comment>
<comment type="subcellular location">
    <subcellularLocation>
        <location evidence="1">Nucleus</location>
    </subcellularLocation>
</comment>